<comment type="function">
    <text evidence="3">Sequence-specific transcriptional activator. Recognizes the DNA sequence 5'-C[CA]GGAAGT-3' (By similarity).</text>
</comment>
<comment type="subunit">
    <text evidence="1">Can form homodimers or heterodimers with ETV6/TEL1.</text>
</comment>
<comment type="subcellular location">
    <subcellularLocation>
        <location evidence="3">Nucleus</location>
    </subcellularLocation>
</comment>
<comment type="similarity">
    <text evidence="7">Belongs to the ETS family.</text>
</comment>
<protein>
    <recommendedName>
        <fullName>Friend leukemia integration 1 transcription factor</fullName>
    </recommendedName>
    <alternativeName>
        <fullName>Proto-oncogene Fli-1</fullName>
    </alternativeName>
</protein>
<reference key="1">
    <citation type="submission" date="2006-02" db="EMBL/GenBank/DDBJ databases">
        <authorList>
            <consortium name="NIH - Mammalian Gene Collection (MGC) project"/>
        </authorList>
    </citation>
    <scope>NUCLEOTIDE SEQUENCE [LARGE SCALE MRNA]</scope>
    <source>
        <strain>Hereford</strain>
        <tissue>Hypothalamus</tissue>
    </source>
</reference>
<feature type="chain" id="PRO_0000287135" description="Friend leukemia integration 1 transcription factor">
    <location>
        <begin position="1"/>
        <end position="452"/>
    </location>
</feature>
<feature type="domain" description="PNT" evidence="5">
    <location>
        <begin position="112"/>
        <end position="198"/>
    </location>
</feature>
<feature type="DNA-binding region" description="ETS" evidence="4">
    <location>
        <begin position="281"/>
        <end position="361"/>
    </location>
</feature>
<feature type="region of interest" description="Disordered" evidence="6">
    <location>
        <begin position="202"/>
        <end position="272"/>
    </location>
</feature>
<feature type="compositionally biased region" description="Polar residues" evidence="6">
    <location>
        <begin position="202"/>
        <end position="214"/>
    </location>
</feature>
<feature type="compositionally biased region" description="Basic and acidic residues" evidence="6">
    <location>
        <begin position="215"/>
        <end position="226"/>
    </location>
</feature>
<feature type="compositionally biased region" description="Polar residues" evidence="6">
    <location>
        <begin position="248"/>
        <end position="257"/>
    </location>
</feature>
<feature type="modified residue" description="Phosphoserine" evidence="2">
    <location>
        <position position="39"/>
    </location>
</feature>
<organism>
    <name type="scientific">Bos taurus</name>
    <name type="common">Bovine</name>
    <dbReference type="NCBI Taxonomy" id="9913"/>
    <lineage>
        <taxon>Eukaryota</taxon>
        <taxon>Metazoa</taxon>
        <taxon>Chordata</taxon>
        <taxon>Craniata</taxon>
        <taxon>Vertebrata</taxon>
        <taxon>Euteleostomi</taxon>
        <taxon>Mammalia</taxon>
        <taxon>Eutheria</taxon>
        <taxon>Laurasiatheria</taxon>
        <taxon>Artiodactyla</taxon>
        <taxon>Ruminantia</taxon>
        <taxon>Pecora</taxon>
        <taxon>Bovidae</taxon>
        <taxon>Bovinae</taxon>
        <taxon>Bos</taxon>
    </lineage>
</organism>
<accession>Q29RS8</accession>
<proteinExistence type="evidence at transcript level"/>
<keyword id="KW-0010">Activator</keyword>
<keyword id="KW-0238">DNA-binding</keyword>
<keyword id="KW-0539">Nucleus</keyword>
<keyword id="KW-0597">Phosphoprotein</keyword>
<keyword id="KW-0656">Proto-oncogene</keyword>
<keyword id="KW-1185">Reference proteome</keyword>
<keyword id="KW-0804">Transcription</keyword>
<keyword id="KW-0805">Transcription regulation</keyword>
<gene>
    <name type="primary">FLI1</name>
</gene>
<name>FLI1_BOVIN</name>
<sequence length="452" mass="50865">MDGTIKEALSVVSDDQSLFDSAYGAAAHLPKADMTASGSPDYGQPHKINPLPPQQEWMNQPVRVNVKREYDHMNGSRESPVDCSVSKCGKLVGGGESNTMSYTSYVDEKNGPPPPNMTTNERRVIVPADPTLWTQEHVRQWLEWAIKEYGLMEIDTSFFQNMDGKELCKLNKEDFLRATSLYNTEVLLSHLTYLRESSLLPYNTTSHTDPSSRLNVKEDPSYDSVRRGGWGSNMNSGLNKSPPLAGAQTMSKNTEQRPQPDPYQILGPTSSRLANPGSGQIQLWQFLLELLSDSANASCITWEGTNGEFKMTDPDEVARRWGERKSKPNMNYDKLSRALRYYYDKNIMTKVHGKRYAYKFDFHGIAQALQPHPTESSMYKYPSDISYVPSYHTHQQKVNFVPPHPSSMPVTSSSFFGAASQYWTSPTGGIYPNPNVPRHPNTHVPSHLGSYY</sequence>
<evidence type="ECO:0000250" key="1"/>
<evidence type="ECO:0000250" key="2">
    <source>
        <dbReference type="UniProtKB" id="P26323"/>
    </source>
</evidence>
<evidence type="ECO:0000250" key="3">
    <source>
        <dbReference type="UniProtKB" id="Q01543"/>
    </source>
</evidence>
<evidence type="ECO:0000255" key="4">
    <source>
        <dbReference type="PROSITE-ProRule" id="PRU00237"/>
    </source>
</evidence>
<evidence type="ECO:0000255" key="5">
    <source>
        <dbReference type="PROSITE-ProRule" id="PRU00762"/>
    </source>
</evidence>
<evidence type="ECO:0000256" key="6">
    <source>
        <dbReference type="SAM" id="MobiDB-lite"/>
    </source>
</evidence>
<evidence type="ECO:0000305" key="7"/>
<dbReference type="EMBL" id="BC114042">
    <property type="protein sequence ID" value="AAI14043.1"/>
    <property type="molecule type" value="mRNA"/>
</dbReference>
<dbReference type="RefSeq" id="NP_001039763.1">
    <property type="nucleotide sequence ID" value="NM_001046298.1"/>
</dbReference>
<dbReference type="SMR" id="Q29RS8"/>
<dbReference type="FunCoup" id="Q29RS8">
    <property type="interactions" value="474"/>
</dbReference>
<dbReference type="STRING" id="9913.ENSBTAP00000010899"/>
<dbReference type="PaxDb" id="9913-ENSBTAP00000010899"/>
<dbReference type="Ensembl" id="ENSBTAT00000071122.2">
    <property type="protein sequence ID" value="ENSBTAP00000068993.2"/>
    <property type="gene ID" value="ENSBTAG00000008283.6"/>
</dbReference>
<dbReference type="GeneID" id="529124"/>
<dbReference type="KEGG" id="bta:529124"/>
<dbReference type="CTD" id="2313"/>
<dbReference type="VEuPathDB" id="HostDB:ENSBTAG00000008283"/>
<dbReference type="VGNC" id="VGNC:29031">
    <property type="gene designation" value="FLI1"/>
</dbReference>
<dbReference type="eggNOG" id="KOG3806">
    <property type="taxonomic scope" value="Eukaryota"/>
</dbReference>
<dbReference type="GeneTree" id="ENSGT00940000158261"/>
<dbReference type="InParanoid" id="Q29RS8"/>
<dbReference type="OMA" id="XSLLAYN"/>
<dbReference type="OrthoDB" id="10067219at2759"/>
<dbReference type="Proteomes" id="UP000009136">
    <property type="component" value="Chromosome 29"/>
</dbReference>
<dbReference type="Bgee" id="ENSBTAG00000008283">
    <property type="expression patterns" value="Expressed in blood and 101 other cell types or tissues"/>
</dbReference>
<dbReference type="GO" id="GO:0005634">
    <property type="term" value="C:nucleus"/>
    <property type="evidence" value="ECO:0000318"/>
    <property type="project" value="GO_Central"/>
</dbReference>
<dbReference type="GO" id="GO:0000981">
    <property type="term" value="F:DNA-binding transcription factor activity, RNA polymerase II-specific"/>
    <property type="evidence" value="ECO:0000318"/>
    <property type="project" value="GO_Central"/>
</dbReference>
<dbReference type="GO" id="GO:0043565">
    <property type="term" value="F:sequence-specific DNA binding"/>
    <property type="evidence" value="ECO:0007669"/>
    <property type="project" value="InterPro"/>
</dbReference>
<dbReference type="GO" id="GO:0030154">
    <property type="term" value="P:cell differentiation"/>
    <property type="evidence" value="ECO:0000318"/>
    <property type="project" value="GO_Central"/>
</dbReference>
<dbReference type="GO" id="GO:0006357">
    <property type="term" value="P:regulation of transcription by RNA polymerase II"/>
    <property type="evidence" value="ECO:0000318"/>
    <property type="project" value="GO_Central"/>
</dbReference>
<dbReference type="CDD" id="cd08541">
    <property type="entry name" value="SAM_PNT-FLI-1"/>
    <property type="match status" value="1"/>
</dbReference>
<dbReference type="FunFam" id="1.10.150.50:FF:000010">
    <property type="entry name" value="Fli-1 proto-oncogene, ETS transcription factor"/>
    <property type="match status" value="1"/>
</dbReference>
<dbReference type="FunFam" id="1.10.10.10:FF:000039">
    <property type="entry name" value="Friend leukemia integration 1 transcription factor"/>
    <property type="match status" value="1"/>
</dbReference>
<dbReference type="Gene3D" id="1.10.150.50">
    <property type="entry name" value="Transcription Factor, Ets-1"/>
    <property type="match status" value="1"/>
</dbReference>
<dbReference type="Gene3D" id="1.10.10.10">
    <property type="entry name" value="Winged helix-like DNA-binding domain superfamily/Winged helix DNA-binding domain"/>
    <property type="match status" value="1"/>
</dbReference>
<dbReference type="InterPro" id="IPR000418">
    <property type="entry name" value="Ets_dom"/>
</dbReference>
<dbReference type="InterPro" id="IPR046328">
    <property type="entry name" value="ETS_fam"/>
</dbReference>
<dbReference type="InterPro" id="IPR003118">
    <property type="entry name" value="Pointed_dom"/>
</dbReference>
<dbReference type="InterPro" id="IPR013761">
    <property type="entry name" value="SAM/pointed_sf"/>
</dbReference>
<dbReference type="InterPro" id="IPR035573">
    <property type="entry name" value="SAM_PNT-FLI-1"/>
</dbReference>
<dbReference type="InterPro" id="IPR036388">
    <property type="entry name" value="WH-like_DNA-bd_sf"/>
</dbReference>
<dbReference type="InterPro" id="IPR036390">
    <property type="entry name" value="WH_DNA-bd_sf"/>
</dbReference>
<dbReference type="PANTHER" id="PTHR11849">
    <property type="entry name" value="ETS"/>
    <property type="match status" value="1"/>
</dbReference>
<dbReference type="PANTHER" id="PTHR11849:SF161">
    <property type="entry name" value="FRIEND LEUKEMIA INTEGRATION 1 TRANSCRIPTION FACTOR"/>
    <property type="match status" value="1"/>
</dbReference>
<dbReference type="Pfam" id="PF00178">
    <property type="entry name" value="Ets"/>
    <property type="match status" value="1"/>
</dbReference>
<dbReference type="Pfam" id="PF02198">
    <property type="entry name" value="SAM_PNT"/>
    <property type="match status" value="1"/>
</dbReference>
<dbReference type="PRINTS" id="PR00454">
    <property type="entry name" value="ETSDOMAIN"/>
</dbReference>
<dbReference type="SMART" id="SM00413">
    <property type="entry name" value="ETS"/>
    <property type="match status" value="1"/>
</dbReference>
<dbReference type="SMART" id="SM00251">
    <property type="entry name" value="SAM_PNT"/>
    <property type="match status" value="1"/>
</dbReference>
<dbReference type="SUPFAM" id="SSF47769">
    <property type="entry name" value="SAM/Pointed domain"/>
    <property type="match status" value="1"/>
</dbReference>
<dbReference type="SUPFAM" id="SSF46785">
    <property type="entry name" value="Winged helix' DNA-binding domain"/>
    <property type="match status" value="1"/>
</dbReference>
<dbReference type="PROSITE" id="PS00345">
    <property type="entry name" value="ETS_DOMAIN_1"/>
    <property type="match status" value="1"/>
</dbReference>
<dbReference type="PROSITE" id="PS00346">
    <property type="entry name" value="ETS_DOMAIN_2"/>
    <property type="match status" value="1"/>
</dbReference>
<dbReference type="PROSITE" id="PS50061">
    <property type="entry name" value="ETS_DOMAIN_3"/>
    <property type="match status" value="1"/>
</dbReference>
<dbReference type="PROSITE" id="PS51433">
    <property type="entry name" value="PNT"/>
    <property type="match status" value="1"/>
</dbReference>